<organism>
    <name type="scientific">Pseudomonas putida (strain ATCC 47054 / DSM 6125 / CFBP 8728 / NCIMB 11950 / KT2440)</name>
    <dbReference type="NCBI Taxonomy" id="160488"/>
    <lineage>
        <taxon>Bacteria</taxon>
        <taxon>Pseudomonadati</taxon>
        <taxon>Pseudomonadota</taxon>
        <taxon>Gammaproteobacteria</taxon>
        <taxon>Pseudomonadales</taxon>
        <taxon>Pseudomonadaceae</taxon>
        <taxon>Pseudomonas</taxon>
    </lineage>
</organism>
<comment type="function">
    <text evidence="1">This enzyme is involved in nucleotide metabolism: it produces dUMP, the immediate precursor of thymidine nucleotides and it decreases the intracellular concentration of dUTP so that uracil cannot be incorporated into DNA.</text>
</comment>
<comment type="catalytic activity">
    <reaction evidence="1">
        <text>dUTP + H2O = dUMP + diphosphate + H(+)</text>
        <dbReference type="Rhea" id="RHEA:10248"/>
        <dbReference type="ChEBI" id="CHEBI:15377"/>
        <dbReference type="ChEBI" id="CHEBI:15378"/>
        <dbReference type="ChEBI" id="CHEBI:33019"/>
        <dbReference type="ChEBI" id="CHEBI:61555"/>
        <dbReference type="ChEBI" id="CHEBI:246422"/>
        <dbReference type="EC" id="3.6.1.23"/>
    </reaction>
</comment>
<comment type="cofactor">
    <cofactor evidence="1">
        <name>Mg(2+)</name>
        <dbReference type="ChEBI" id="CHEBI:18420"/>
    </cofactor>
</comment>
<comment type="pathway">
    <text evidence="1">Pyrimidine metabolism; dUMP biosynthesis; dUMP from dCTP (dUTP route): step 2/2.</text>
</comment>
<comment type="similarity">
    <text evidence="1">Belongs to the dUTPase family.</text>
</comment>
<feature type="chain" id="PRO_0000182896" description="Deoxyuridine 5'-triphosphate nucleotidohydrolase">
    <location>
        <begin position="1"/>
        <end position="151"/>
    </location>
</feature>
<feature type="binding site" evidence="1">
    <location>
        <begin position="70"/>
        <end position="72"/>
    </location>
    <ligand>
        <name>substrate</name>
    </ligand>
</feature>
<feature type="binding site" evidence="1">
    <location>
        <position position="83"/>
    </location>
    <ligand>
        <name>substrate</name>
    </ligand>
</feature>
<feature type="binding site" evidence="1">
    <location>
        <begin position="87"/>
        <end position="89"/>
    </location>
    <ligand>
        <name>substrate</name>
    </ligand>
</feature>
<feature type="binding site" evidence="1">
    <location>
        <position position="97"/>
    </location>
    <ligand>
        <name>substrate</name>
    </ligand>
</feature>
<gene>
    <name evidence="1" type="primary">dut</name>
    <name type="ordered locus">PP_5286</name>
</gene>
<evidence type="ECO:0000255" key="1">
    <source>
        <dbReference type="HAMAP-Rule" id="MF_00116"/>
    </source>
</evidence>
<keyword id="KW-0378">Hydrolase</keyword>
<keyword id="KW-0460">Magnesium</keyword>
<keyword id="KW-0479">Metal-binding</keyword>
<keyword id="KW-0546">Nucleotide metabolism</keyword>
<keyword id="KW-1185">Reference proteome</keyword>
<name>DUT_PSEPK</name>
<reference key="1">
    <citation type="journal article" date="2002" name="Environ. Microbiol.">
        <title>Complete genome sequence and comparative analysis of the metabolically versatile Pseudomonas putida KT2440.</title>
        <authorList>
            <person name="Nelson K.E."/>
            <person name="Weinel C."/>
            <person name="Paulsen I.T."/>
            <person name="Dodson R.J."/>
            <person name="Hilbert H."/>
            <person name="Martins dos Santos V.A.P."/>
            <person name="Fouts D.E."/>
            <person name="Gill S.R."/>
            <person name="Pop M."/>
            <person name="Holmes M."/>
            <person name="Brinkac L.M."/>
            <person name="Beanan M.J."/>
            <person name="DeBoy R.T."/>
            <person name="Daugherty S.C."/>
            <person name="Kolonay J.F."/>
            <person name="Madupu R."/>
            <person name="Nelson W.C."/>
            <person name="White O."/>
            <person name="Peterson J.D."/>
            <person name="Khouri H.M."/>
            <person name="Hance I."/>
            <person name="Chris Lee P."/>
            <person name="Holtzapple E.K."/>
            <person name="Scanlan D."/>
            <person name="Tran K."/>
            <person name="Moazzez A."/>
            <person name="Utterback T.R."/>
            <person name="Rizzo M."/>
            <person name="Lee K."/>
            <person name="Kosack D."/>
            <person name="Moestl D."/>
            <person name="Wedler H."/>
            <person name="Lauber J."/>
            <person name="Stjepandic D."/>
            <person name="Hoheisel J."/>
            <person name="Straetz M."/>
            <person name="Heim S."/>
            <person name="Kiewitz C."/>
            <person name="Eisen J.A."/>
            <person name="Timmis K.N."/>
            <person name="Duesterhoeft A."/>
            <person name="Tuemmler B."/>
            <person name="Fraser C.M."/>
        </authorList>
    </citation>
    <scope>NUCLEOTIDE SEQUENCE [LARGE SCALE GENOMIC DNA]</scope>
    <source>
        <strain>ATCC 47054 / DSM 6125 / CFBP 8728 / NCIMB 11950 / KT2440</strain>
    </source>
</reference>
<protein>
    <recommendedName>
        <fullName evidence="1">Deoxyuridine 5'-triphosphate nucleotidohydrolase</fullName>
        <shortName evidence="1">dUTPase</shortName>
        <ecNumber evidence="1">3.6.1.23</ecNumber>
    </recommendedName>
    <alternativeName>
        <fullName evidence="1">dUTP pyrophosphatase</fullName>
    </alternativeName>
</protein>
<sequence>MHALQAKILDPRLGSEFPLPAYATPGSAGLDLRALLKEDTILEPGQTVLIPTGLSIYIGDPGLAAVILPRSGLGHKHGIVLGNLVGLIDSDYQGELMVSCWNRGNTPFTIAVGERIAQLVLVPVVQAHFEIVEAFDESQRGAGGFGHSGSH</sequence>
<proteinExistence type="inferred from homology"/>
<dbReference type="EC" id="3.6.1.23" evidence="1"/>
<dbReference type="EMBL" id="AE015451">
    <property type="protein sequence ID" value="AAN70851.1"/>
    <property type="molecule type" value="Genomic_DNA"/>
</dbReference>
<dbReference type="RefSeq" id="NP_747387.1">
    <property type="nucleotide sequence ID" value="NC_002947.4"/>
</dbReference>
<dbReference type="RefSeq" id="WP_010955791.1">
    <property type="nucleotide sequence ID" value="NZ_CP169744.1"/>
</dbReference>
<dbReference type="SMR" id="Q88C95"/>
<dbReference type="STRING" id="160488.PP_5286"/>
<dbReference type="PaxDb" id="160488-PP_5286"/>
<dbReference type="GeneID" id="83683095"/>
<dbReference type="KEGG" id="ppu:PP_5286"/>
<dbReference type="PATRIC" id="fig|160488.4.peg.5639"/>
<dbReference type="eggNOG" id="COG0756">
    <property type="taxonomic scope" value="Bacteria"/>
</dbReference>
<dbReference type="HOGENOM" id="CLU_068508_1_1_6"/>
<dbReference type="OrthoDB" id="9809956at2"/>
<dbReference type="PhylomeDB" id="Q88C95"/>
<dbReference type="BioCyc" id="PPUT160488:G1G01-5644-MONOMER"/>
<dbReference type="UniPathway" id="UPA00610">
    <property type="reaction ID" value="UER00666"/>
</dbReference>
<dbReference type="Proteomes" id="UP000000556">
    <property type="component" value="Chromosome"/>
</dbReference>
<dbReference type="GO" id="GO:0004170">
    <property type="term" value="F:dUTP diphosphatase activity"/>
    <property type="evidence" value="ECO:0007669"/>
    <property type="project" value="UniProtKB-UniRule"/>
</dbReference>
<dbReference type="GO" id="GO:0000287">
    <property type="term" value="F:magnesium ion binding"/>
    <property type="evidence" value="ECO:0007669"/>
    <property type="project" value="UniProtKB-UniRule"/>
</dbReference>
<dbReference type="GO" id="GO:0006226">
    <property type="term" value="P:dUMP biosynthetic process"/>
    <property type="evidence" value="ECO:0007669"/>
    <property type="project" value="UniProtKB-UniRule"/>
</dbReference>
<dbReference type="GO" id="GO:0046081">
    <property type="term" value="P:dUTP catabolic process"/>
    <property type="evidence" value="ECO:0007669"/>
    <property type="project" value="InterPro"/>
</dbReference>
<dbReference type="CDD" id="cd07557">
    <property type="entry name" value="trimeric_dUTPase"/>
    <property type="match status" value="1"/>
</dbReference>
<dbReference type="FunFam" id="2.70.40.10:FF:000002">
    <property type="entry name" value="dUTP diphosphatase"/>
    <property type="match status" value="1"/>
</dbReference>
<dbReference type="Gene3D" id="2.70.40.10">
    <property type="match status" value="1"/>
</dbReference>
<dbReference type="HAMAP" id="MF_00116">
    <property type="entry name" value="dUTPase_bact"/>
    <property type="match status" value="1"/>
</dbReference>
<dbReference type="InterPro" id="IPR008181">
    <property type="entry name" value="dUTPase"/>
</dbReference>
<dbReference type="InterPro" id="IPR029054">
    <property type="entry name" value="dUTPase-like"/>
</dbReference>
<dbReference type="InterPro" id="IPR036157">
    <property type="entry name" value="dUTPase-like_sf"/>
</dbReference>
<dbReference type="InterPro" id="IPR033704">
    <property type="entry name" value="dUTPase_trimeric"/>
</dbReference>
<dbReference type="NCBIfam" id="TIGR00576">
    <property type="entry name" value="dut"/>
    <property type="match status" value="1"/>
</dbReference>
<dbReference type="NCBIfam" id="NF001862">
    <property type="entry name" value="PRK00601.1"/>
    <property type="match status" value="1"/>
</dbReference>
<dbReference type="PANTHER" id="PTHR11241">
    <property type="entry name" value="DEOXYURIDINE 5'-TRIPHOSPHATE NUCLEOTIDOHYDROLASE"/>
    <property type="match status" value="1"/>
</dbReference>
<dbReference type="PANTHER" id="PTHR11241:SF0">
    <property type="entry name" value="DEOXYURIDINE 5'-TRIPHOSPHATE NUCLEOTIDOHYDROLASE"/>
    <property type="match status" value="1"/>
</dbReference>
<dbReference type="Pfam" id="PF00692">
    <property type="entry name" value="dUTPase"/>
    <property type="match status" value="1"/>
</dbReference>
<dbReference type="SUPFAM" id="SSF51283">
    <property type="entry name" value="dUTPase-like"/>
    <property type="match status" value="1"/>
</dbReference>
<accession>Q88C95</accession>